<reference key="1">
    <citation type="journal article" date="2007" name="PLoS ONE">
        <title>Genome sequencing shows that European isolates of Francisella tularensis subspecies tularensis are almost identical to US laboratory strain Schu S4.</title>
        <authorList>
            <person name="Chaudhuri R.R."/>
            <person name="Ren C.-P."/>
            <person name="Desmond L."/>
            <person name="Vincent G.A."/>
            <person name="Silman N.J."/>
            <person name="Brehm J.K."/>
            <person name="Elmore M.J."/>
            <person name="Hudson M.J."/>
            <person name="Forsman M."/>
            <person name="Isherwood K.E."/>
            <person name="Gurycova D."/>
            <person name="Minton N.P."/>
            <person name="Titball R.W."/>
            <person name="Pallen M.J."/>
            <person name="Vipond R."/>
        </authorList>
    </citation>
    <scope>NUCLEOTIDE SEQUENCE [LARGE SCALE GENOMIC DNA]</scope>
    <source>
        <strain>FSC 198</strain>
    </source>
</reference>
<organism>
    <name type="scientific">Francisella tularensis subsp. tularensis (strain FSC 198)</name>
    <dbReference type="NCBI Taxonomy" id="393115"/>
    <lineage>
        <taxon>Bacteria</taxon>
        <taxon>Pseudomonadati</taxon>
        <taxon>Pseudomonadota</taxon>
        <taxon>Gammaproteobacteria</taxon>
        <taxon>Thiotrichales</taxon>
        <taxon>Francisellaceae</taxon>
        <taxon>Francisella</taxon>
    </lineage>
</organism>
<sequence length="62" mass="7142">MDHSVLNVLVCPICKANLYYDKENQVLVCKADKLAYPIRENIPVMLVEEAKKMTLEEVKKYG</sequence>
<name>Y1479_FRAT1</name>
<comment type="similarity">
    <text evidence="1">Belongs to the UPF0434 family.</text>
</comment>
<evidence type="ECO:0000255" key="1">
    <source>
        <dbReference type="HAMAP-Rule" id="MF_01187"/>
    </source>
</evidence>
<feature type="chain" id="PRO_0000291096" description="UPF0434 protein FTF1479c">
    <location>
        <begin position="1"/>
        <end position="62"/>
    </location>
</feature>
<protein>
    <recommendedName>
        <fullName evidence="1">UPF0434 protein FTF1479c</fullName>
    </recommendedName>
</protein>
<dbReference type="EMBL" id="AM286280">
    <property type="protein sequence ID" value="CAL09495.1"/>
    <property type="molecule type" value="Genomic_DNA"/>
</dbReference>
<dbReference type="RefSeq" id="WP_003016659.1">
    <property type="nucleotide sequence ID" value="NC_008245.1"/>
</dbReference>
<dbReference type="SMR" id="Q14GD0"/>
<dbReference type="KEGG" id="ftf:FTF1479c"/>
<dbReference type="HOGENOM" id="CLU_155659_3_1_6"/>
<dbReference type="GO" id="GO:0005829">
    <property type="term" value="C:cytosol"/>
    <property type="evidence" value="ECO:0007669"/>
    <property type="project" value="TreeGrafter"/>
</dbReference>
<dbReference type="FunFam" id="2.20.25.10:FF:000002">
    <property type="entry name" value="UPF0434 protein YcaR"/>
    <property type="match status" value="1"/>
</dbReference>
<dbReference type="Gene3D" id="2.20.25.10">
    <property type="match status" value="1"/>
</dbReference>
<dbReference type="HAMAP" id="MF_01187">
    <property type="entry name" value="UPF0434"/>
    <property type="match status" value="1"/>
</dbReference>
<dbReference type="InterPro" id="IPR005651">
    <property type="entry name" value="Trm112-like"/>
</dbReference>
<dbReference type="PANTHER" id="PTHR33505:SF4">
    <property type="entry name" value="PROTEIN PREY, MITOCHONDRIAL"/>
    <property type="match status" value="1"/>
</dbReference>
<dbReference type="PANTHER" id="PTHR33505">
    <property type="entry name" value="ZGC:162634"/>
    <property type="match status" value="1"/>
</dbReference>
<dbReference type="Pfam" id="PF03966">
    <property type="entry name" value="Trm112p"/>
    <property type="match status" value="1"/>
</dbReference>
<dbReference type="SUPFAM" id="SSF158997">
    <property type="entry name" value="Trm112p-like"/>
    <property type="match status" value="1"/>
</dbReference>
<gene>
    <name type="ordered locus">FTF1479c</name>
</gene>
<accession>Q14GD0</accession>
<proteinExistence type="inferred from homology"/>